<evidence type="ECO:0000255" key="1">
    <source>
        <dbReference type="HAMAP-Rule" id="MF_02109"/>
    </source>
</evidence>
<accession>A2SQS1</accession>
<gene>
    <name type="ordered locus">Mlab_0503</name>
</gene>
<reference key="1">
    <citation type="journal article" date="2009" name="Stand. Genomic Sci.">
        <title>Complete genome sequence of Methanocorpusculum labreanum type strain Z.</title>
        <authorList>
            <person name="Anderson I.J."/>
            <person name="Sieprawska-Lupa M."/>
            <person name="Goltsman E."/>
            <person name="Lapidus A."/>
            <person name="Copeland A."/>
            <person name="Glavina Del Rio T."/>
            <person name="Tice H."/>
            <person name="Dalin E."/>
            <person name="Barry K."/>
            <person name="Pitluck S."/>
            <person name="Hauser L."/>
            <person name="Land M."/>
            <person name="Lucas S."/>
            <person name="Richardson P."/>
            <person name="Whitman W.B."/>
            <person name="Kyrpides N.C."/>
        </authorList>
    </citation>
    <scope>NUCLEOTIDE SEQUENCE [LARGE SCALE GENOMIC DNA]</scope>
    <source>
        <strain>ATCC 43576 / DSM 4855 / Z</strain>
    </source>
</reference>
<sequence length="412" mass="44181">MGDYVLRCLTGGEVLEDHYTLACPHHPGFVRAEYTAKQLTVRENLPGVFRFSDWLPVRGSVPTRSRPVTFQNRELCRELGQPNLWITFTGYYPERGCYVPTGSFKELEALPTIVRLNEAGGGTLVVASAGNTGRAFAQMSAEFGTPVVLVVPESSADKLWTAGYFDHSSIRLVTVRGDYTDAIKTADKICEAPGFFPEGGGKNIARRDGMGCVMLDGAVTIGKLPEYYFQAVGSGTGGIAAWEAAIRLIGDGRFGSKFPELHLSQNLPFVPMVRAWNAGRDHIIDEDMPDAQASISAVSAHVLTNRTPPYGICGGVYDAMKSCGGQMYTVENKDAASAASLFAEAENGIDIDPAAAVAFASLISAAEEGSIRTNADILLNITGGGYQRVKKDCETAKIGVYETVDTGEVPVL</sequence>
<protein>
    <recommendedName>
        <fullName evidence="1">Cysteate synthase</fullName>
        <shortName evidence="1">CS</shortName>
        <shortName evidence="1">Cya synthase</shortName>
        <ecNumber evidence="1">2.5.1.76</ecNumber>
    </recommendedName>
</protein>
<comment type="function">
    <text evidence="1">Specifically catalyzes the beta-elimination of phosphate from L-phosphoserine and the beta-addition of sulfite to the dehydroalanine intermediate to produce L-cysteate.</text>
</comment>
<comment type="catalytic activity">
    <reaction evidence="1">
        <text>O-phospho-L-serine + sulfite + H(+) = L-cysteate + phosphate</text>
        <dbReference type="Rhea" id="RHEA:26486"/>
        <dbReference type="ChEBI" id="CHEBI:15378"/>
        <dbReference type="ChEBI" id="CHEBI:17359"/>
        <dbReference type="ChEBI" id="CHEBI:43474"/>
        <dbReference type="ChEBI" id="CHEBI:57524"/>
        <dbReference type="ChEBI" id="CHEBI:58090"/>
        <dbReference type="EC" id="2.5.1.76"/>
    </reaction>
</comment>
<comment type="cofactor">
    <cofactor evidence="1">
        <name>pyridoxal 5'-phosphate</name>
        <dbReference type="ChEBI" id="CHEBI:597326"/>
    </cofactor>
</comment>
<comment type="pathway">
    <text evidence="1">Cofactor biosynthesis; coenzyme M biosynthesis.</text>
</comment>
<comment type="subunit">
    <text evidence="1">Homotrimer.</text>
</comment>
<comment type="similarity">
    <text evidence="1">Belongs to the threonine synthase family. Cysteate synthase subfamily.</text>
</comment>
<dbReference type="EC" id="2.5.1.76" evidence="1"/>
<dbReference type="EMBL" id="CP000559">
    <property type="protein sequence ID" value="ABN06677.1"/>
    <property type="molecule type" value="Genomic_DNA"/>
</dbReference>
<dbReference type="RefSeq" id="WP_011832878.1">
    <property type="nucleotide sequence ID" value="NC_008942.1"/>
</dbReference>
<dbReference type="SMR" id="A2SQS1"/>
<dbReference type="STRING" id="410358.Mlab_0503"/>
<dbReference type="GeneID" id="4794996"/>
<dbReference type="KEGG" id="mla:Mlab_0503"/>
<dbReference type="eggNOG" id="arCOG01434">
    <property type="taxonomic scope" value="Archaea"/>
</dbReference>
<dbReference type="HOGENOM" id="CLU_666687_0_0_2"/>
<dbReference type="OrthoDB" id="6371at2157"/>
<dbReference type="UniPathway" id="UPA00355"/>
<dbReference type="Proteomes" id="UP000000365">
    <property type="component" value="Chromosome"/>
</dbReference>
<dbReference type="GO" id="GO:0005524">
    <property type="term" value="F:ATP binding"/>
    <property type="evidence" value="ECO:0007669"/>
    <property type="project" value="TreeGrafter"/>
</dbReference>
<dbReference type="GO" id="GO:0044686">
    <property type="term" value="F:cysteate synthase activity"/>
    <property type="evidence" value="ECO:0007669"/>
    <property type="project" value="UniProtKB-UniRule"/>
</dbReference>
<dbReference type="GO" id="GO:0003941">
    <property type="term" value="F:L-serine ammonia-lyase activity"/>
    <property type="evidence" value="ECO:0007669"/>
    <property type="project" value="TreeGrafter"/>
</dbReference>
<dbReference type="GO" id="GO:0000287">
    <property type="term" value="F:magnesium ion binding"/>
    <property type="evidence" value="ECO:0007669"/>
    <property type="project" value="TreeGrafter"/>
</dbReference>
<dbReference type="GO" id="GO:0030170">
    <property type="term" value="F:pyridoxal phosphate binding"/>
    <property type="evidence" value="ECO:0007669"/>
    <property type="project" value="UniProtKB-UniRule"/>
</dbReference>
<dbReference type="GO" id="GO:0030378">
    <property type="term" value="F:serine racemase activity"/>
    <property type="evidence" value="ECO:0007669"/>
    <property type="project" value="TreeGrafter"/>
</dbReference>
<dbReference type="GO" id="GO:0018114">
    <property type="term" value="F:threonine racemase activity"/>
    <property type="evidence" value="ECO:0007669"/>
    <property type="project" value="TreeGrafter"/>
</dbReference>
<dbReference type="GO" id="GO:0019295">
    <property type="term" value="P:coenzyme M biosynthetic process"/>
    <property type="evidence" value="ECO:0007669"/>
    <property type="project" value="UniProtKB-UniRule"/>
</dbReference>
<dbReference type="GO" id="GO:0070179">
    <property type="term" value="P:D-serine biosynthetic process"/>
    <property type="evidence" value="ECO:0007669"/>
    <property type="project" value="TreeGrafter"/>
</dbReference>
<dbReference type="Gene3D" id="3.40.50.1100">
    <property type="match status" value="2"/>
</dbReference>
<dbReference type="HAMAP" id="MF_02109">
    <property type="entry name" value="Cya_synthase"/>
    <property type="match status" value="1"/>
</dbReference>
<dbReference type="InterPro" id="IPR022401">
    <property type="entry name" value="Cysteate_synthase"/>
</dbReference>
<dbReference type="InterPro" id="IPR001926">
    <property type="entry name" value="TrpB-like_PALP"/>
</dbReference>
<dbReference type="InterPro" id="IPR036052">
    <property type="entry name" value="TrpB-like_PALP_sf"/>
</dbReference>
<dbReference type="NCBIfam" id="TIGR03844">
    <property type="entry name" value="cysteate_syn"/>
    <property type="match status" value="1"/>
</dbReference>
<dbReference type="PANTHER" id="PTHR43050">
    <property type="entry name" value="SERINE / THREONINE RACEMASE FAMILY MEMBER"/>
    <property type="match status" value="1"/>
</dbReference>
<dbReference type="PANTHER" id="PTHR43050:SF1">
    <property type="entry name" value="SERINE RACEMASE"/>
    <property type="match status" value="1"/>
</dbReference>
<dbReference type="Pfam" id="PF00291">
    <property type="entry name" value="PALP"/>
    <property type="match status" value="1"/>
</dbReference>
<dbReference type="SUPFAM" id="SSF53686">
    <property type="entry name" value="Tryptophan synthase beta subunit-like PLP-dependent enzymes"/>
    <property type="match status" value="1"/>
</dbReference>
<organism>
    <name type="scientific">Methanocorpusculum labreanum (strain ATCC 43576 / DSM 4855 / Z)</name>
    <dbReference type="NCBI Taxonomy" id="410358"/>
    <lineage>
        <taxon>Archaea</taxon>
        <taxon>Methanobacteriati</taxon>
        <taxon>Methanobacteriota</taxon>
        <taxon>Stenosarchaea group</taxon>
        <taxon>Methanomicrobia</taxon>
        <taxon>Methanomicrobiales</taxon>
        <taxon>Methanocorpusculaceae</taxon>
        <taxon>Methanocorpusculum</taxon>
    </lineage>
</organism>
<feature type="chain" id="PRO_0000392646" description="Cysteate synthase">
    <location>
        <begin position="1"/>
        <end position="412"/>
    </location>
</feature>
<feature type="binding site" evidence="1">
    <location>
        <position position="131"/>
    </location>
    <ligand>
        <name>pyridoxal 5'-phosphate</name>
        <dbReference type="ChEBI" id="CHEBI:597326"/>
    </ligand>
</feature>
<feature type="binding site" evidence="1">
    <location>
        <position position="382"/>
    </location>
    <ligand>
        <name>pyridoxal 5'-phosphate</name>
        <dbReference type="ChEBI" id="CHEBI:597326"/>
    </ligand>
</feature>
<feature type="modified residue" description="N6-(pyridoxal phosphate)lysine" evidence="1">
    <location>
        <position position="105"/>
    </location>
</feature>
<name>CYAS_METLZ</name>
<keyword id="KW-0174">Coenzyme M biosynthesis</keyword>
<keyword id="KW-0663">Pyridoxal phosphate</keyword>
<keyword id="KW-1185">Reference proteome</keyword>
<keyword id="KW-0808">Transferase</keyword>
<proteinExistence type="inferred from homology"/>